<keyword id="KW-0349">Heme</keyword>
<keyword id="KW-0408">Iron</keyword>
<keyword id="KW-0479">Metal-binding</keyword>
<keyword id="KW-0503">Monooxygenase</keyword>
<keyword id="KW-0560">Oxidoreductase</keyword>
<keyword id="KW-1185">Reference proteome</keyword>
<comment type="function">
    <text evidence="2 3 10">Cytochrome P450 monooxygenase; part of the gene cluster that mediates the biosynthesis of sesquiterpenyl epoxy-cyclohexenoids (SECs) such as anthrobotrisins and arthrosporols, metabolites that possess a novel hybrid carbon skeleton consisting of a polyketide-derived epoxycyclohexenol combined with a terpenoid-derived monocyclic sesquiterpenol substructure (PKS-PTS hybrid) (PubMed:28692300, PubMed:33823587). The SEC pathway plays an important role for fungal soil colonization via decreasing fungal nematode-capturing ability (PubMed:33823587). Within the pathway, the cytochrome P450 monooxygenase AOL_s00215g278 plays a role in the oxygenation of the phenol moiety, most likely in the epoxy formation (PubMed:28692300, PubMed:33823587). The pathway begins with the biosynthesis of 6-methylsalicylic acid (6-MSA), the first precursor of the polyketide-derived epoxycyclohexenol in arthrosporols, by the polyketide synthase (PKS) AOL_s00215g283 via condensation of 1 acetate and 3 malonate units. The 6-methylsalicylic acid decarboxylase AOL_s00215g281 then catalyzes the decarboxylation of 6-methylsalicylic acid to yield m-cresol. The cytochrome P450 monooxygenase AOL_s00215g282 further oxidizes m-cresol to yield toluquinol. With the assistance of the oxidoreductase AOL_s00215g277, the polyprenyl transferase AOL_s00215g276 catalyzes the farnesylation of toluquinol to produce farnesyl hydroquinone, the hybrid precursor for biosynthesis of SECs. Farnesyl hydroquinone undergoes epoxidation and then subsequent dehydrogenation to form farnesyl epoxy-quinone, the first and simplest SEC. The cytochrome P450 monooxygenase AOL_s00215g278 and the FAD-dependent monooxygenase AOL_s00215g279 might be involved in the oxygenation of the phenol moiety, most likely in the epoxy formation. The cytochrome P450 monooxygenases AOL_s00215g274 and AOL_s00215g280 are involved in specific regional ketone reductions at respectively C-4 and C-1 of farnesyl epoxy-quinone PubMed:33823587 (Probable).</text>
</comment>
<comment type="cofactor">
    <cofactor evidence="1">
        <name>heme</name>
        <dbReference type="ChEBI" id="CHEBI:30413"/>
    </cofactor>
</comment>
<comment type="pathway">
    <text evidence="3">Secondary metabolite biosynthesis; terpenoid biosynthesis.</text>
</comment>
<comment type="induction">
    <text evidence="4 5">Expression is down-regulated by the cluster-specific transcription factor AOL_s00215g275 (PubMed:36547594). Expression is also down-regulated by the HOG1-MAPK pathway downstream transcription factor MSN2 (PubMed:38331317).</text>
</comment>
<comment type="disruption phenotype">
    <text evidence="2 3">Abolishes the production of arthrobotrisins A to D and arthrosporol A, and leads to the accumulation of farnesyl hydroquinone, the first hybrid precursor for biosynthesis of SECs (PubMed:28692300, PubMed:33823587). Shows substantial reduction in conidiation (PubMed:33823587). Develops far more adhesive trapping devices and traps and increases the number of captured nematodes by the traps (PubMed:33823587). Shows significantly increased ammonia levels in fungal mycelia (PubMed:33823587).</text>
</comment>
<comment type="similarity">
    <text evidence="8">Belongs to the cytochrome P450 family.</text>
</comment>
<organism>
    <name type="scientific">Arthrobotrys oligospora (strain ATCC 24927 / CBS 115.81 / DSM 1491)</name>
    <name type="common">Nematode-trapping fungus</name>
    <name type="synonym">Didymozoophaga oligospora</name>
    <dbReference type="NCBI Taxonomy" id="756982"/>
    <lineage>
        <taxon>Eukaryota</taxon>
        <taxon>Fungi</taxon>
        <taxon>Dikarya</taxon>
        <taxon>Ascomycota</taxon>
        <taxon>Pezizomycotina</taxon>
        <taxon>Orbiliomycetes</taxon>
        <taxon>Orbiliales</taxon>
        <taxon>Orbiliaceae</taxon>
        <taxon>Orbilia</taxon>
        <taxon>Orbilia oligospora</taxon>
    </lineage>
</organism>
<accession>G1XTZ9</accession>
<feature type="chain" id="PRO_0000457844" description="Cytochrome P450 monooxygenase AOL_s00215g278">
    <location>
        <begin position="1"/>
        <end position="585"/>
    </location>
</feature>
<feature type="binding site" description="axial binding residue" evidence="1">
    <location>
        <position position="518"/>
    </location>
    <ligand>
        <name>heme</name>
        <dbReference type="ChEBI" id="CHEBI:30413"/>
    </ligand>
    <ligandPart>
        <name>Fe</name>
        <dbReference type="ChEBI" id="CHEBI:18248"/>
    </ligandPart>
</feature>
<proteinExistence type="evidence at transcript level"/>
<evidence type="ECO:0000250" key="1">
    <source>
        <dbReference type="UniProtKB" id="P04798"/>
    </source>
</evidence>
<evidence type="ECO:0000269" key="2">
    <source>
    </source>
</evidence>
<evidence type="ECO:0000269" key="3">
    <source>
    </source>
</evidence>
<evidence type="ECO:0000269" key="4">
    <source>
    </source>
</evidence>
<evidence type="ECO:0000269" key="5">
    <source>
    </source>
</evidence>
<evidence type="ECO:0000303" key="6">
    <source>
    </source>
</evidence>
<evidence type="ECO:0000303" key="7">
    <source>
    </source>
</evidence>
<evidence type="ECO:0000305" key="8"/>
<evidence type="ECO:0000305" key="9">
    <source>
    </source>
</evidence>
<evidence type="ECO:0000305" key="10">
    <source>
    </source>
</evidence>
<gene>
    <name type="ORF">AOL_s00215g278</name>
</gene>
<reference key="1">
    <citation type="journal article" date="2011" name="PLoS Pathog.">
        <title>Genomic and proteomic analyses of the fungus Arthrobotrys oligospora provide insights into nematode-trap formation.</title>
        <authorList>
            <person name="Yang J."/>
            <person name="Wang L."/>
            <person name="Ji X."/>
            <person name="Feng Y."/>
            <person name="Li X."/>
            <person name="Zou C."/>
            <person name="Xu J."/>
            <person name="Ren Y."/>
            <person name="Mi Q."/>
            <person name="Wu J."/>
            <person name="Liu S."/>
            <person name="Liu Y."/>
            <person name="Huang X."/>
            <person name="Wang H."/>
            <person name="Niu X."/>
            <person name="Li J."/>
            <person name="Liang L."/>
            <person name="Luo Y."/>
            <person name="Ji K."/>
            <person name="Zhou W."/>
            <person name="Yu Z."/>
            <person name="Li G."/>
            <person name="Liu Y."/>
            <person name="Li L."/>
            <person name="Qiao M."/>
            <person name="Feng L."/>
            <person name="Zhang K.-Q."/>
        </authorList>
    </citation>
    <scope>NUCLEOTIDE SEQUENCE [LARGE SCALE GENOMIC DNA]</scope>
    <source>
        <strain>ATCC 24927 / CBS 115.81 / DSM 1491</strain>
    </source>
</reference>
<reference key="2">
    <citation type="journal article" date="2017" name="Org. Lett.">
        <title>Selected mutations revealed intermediates and key precursors in the biosynthesis of polyketide-terpenoid hybrid sesquiterpenyl epoxy-cyclohexenoids.</title>
        <authorList>
            <person name="Teng L.L."/>
            <person name="Song T.Y."/>
            <person name="Xu Z.F."/>
            <person name="Liu X."/>
            <person name="Dai R."/>
            <person name="Chen Y.H."/>
            <person name="Li S.H."/>
            <person name="Zhang K.Q."/>
            <person name="Niu X.M."/>
        </authorList>
    </citation>
    <scope>FUNCTION</scope>
    <scope>DISRUPTION PHENOTYPE</scope>
</reference>
<reference key="3">
    <citation type="journal article" date="2021" name="J. Agric. Food Chem.">
        <title>Polyketide synthase-terpenoid synthase hybrid pathway regulation of trap formation through ammonia metabolism controls soil colonization of predominant nematode-trapping fungus.</title>
        <authorList>
            <person name="He Z.Q."/>
            <person name="Wang L.J."/>
            <person name="Wang Y.J."/>
            <person name="Chen Y.H."/>
            <person name="Wen Y."/>
            <person name="Zhang K.Q."/>
            <person name="Niu X.M."/>
        </authorList>
    </citation>
    <scope>FUNCTION</scope>
    <scope>DISRUPTION PHENOTYPE</scope>
    <scope>PATHWAY</scope>
</reference>
<reference key="4">
    <citation type="journal article" date="2022" name="J. Fungi">
        <title>The multifaceted gene 275 embedded in the PKS-PTS gene cluster was involved in the regulation of arthrobotrisin biosynthesis, TCA cycle, and septa formation in nematode-trapping fungus Arthrobotrys oligospora.</title>
        <authorList>
            <person name="Zhou J."/>
            <person name="Wu Q.F."/>
            <person name="Li S.H."/>
            <person name="Yan J.X."/>
            <person name="Wu L."/>
            <person name="Cheng Q.Y."/>
            <person name="He Z.Q."/>
            <person name="Yue X.T."/>
            <person name="Zhang K.Q."/>
            <person name="Zhang L.L."/>
            <person name="Niu X.M."/>
        </authorList>
    </citation>
    <scope>INDUCTION</scope>
</reference>
<reference key="5">
    <citation type="journal article" date="2025" name="J. Adv. Res.">
        <title>Identification of a transcription factor AoMsn2 of the Hog1 signaling pathway contributes to fungal growth, development and pathogenicity in Arthrobotrys oligospora.</title>
        <authorList>
            <person name="Liu Q."/>
            <person name="Jiang K."/>
            <person name="Duan S."/>
            <person name="Zhao N."/>
            <person name="Shen Y."/>
            <person name="Zhu L."/>
            <person name="Zhang K.Q."/>
            <person name="Yang J."/>
        </authorList>
    </citation>
    <scope>INDUCTION</scope>
</reference>
<protein>
    <recommendedName>
        <fullName evidence="6">Cytochrome P450 monooxygenase AOL_s00215g278</fullName>
        <ecNumber evidence="9">1.-.-.-</ecNumber>
    </recommendedName>
    <alternativeName>
        <fullName evidence="7">Sesquiterpenyl epoxy-cyclohexenoids cluster protein AOL_s00215g278</fullName>
        <shortName evidence="7">SECs cluster protein AOL_s00215g278</shortName>
    </alternativeName>
</protein>
<dbReference type="EC" id="1.-.-.-" evidence="9"/>
<dbReference type="EMBL" id="ADOT01000316">
    <property type="protein sequence ID" value="EGX43542.1"/>
    <property type="molecule type" value="Genomic_DNA"/>
</dbReference>
<dbReference type="RefSeq" id="XP_011127782.1">
    <property type="nucleotide sequence ID" value="XM_011129480.1"/>
</dbReference>
<dbReference type="SMR" id="G1XTZ9"/>
<dbReference type="FunCoup" id="G1XTZ9">
    <property type="interactions" value="1426"/>
</dbReference>
<dbReference type="STRING" id="756982.G1XTZ9"/>
<dbReference type="GeneID" id="22898688"/>
<dbReference type="eggNOG" id="KOG0158">
    <property type="taxonomic scope" value="Eukaryota"/>
</dbReference>
<dbReference type="HOGENOM" id="CLU_001570_25_2_1"/>
<dbReference type="InParanoid" id="G1XTZ9"/>
<dbReference type="OMA" id="QYTYGFM"/>
<dbReference type="OrthoDB" id="1983334at4890"/>
<dbReference type="UniPathway" id="UPA00213"/>
<dbReference type="Proteomes" id="UP000008784">
    <property type="component" value="Unassembled WGS sequence"/>
</dbReference>
<dbReference type="GO" id="GO:0020037">
    <property type="term" value="F:heme binding"/>
    <property type="evidence" value="ECO:0007669"/>
    <property type="project" value="InterPro"/>
</dbReference>
<dbReference type="GO" id="GO:0005506">
    <property type="term" value="F:iron ion binding"/>
    <property type="evidence" value="ECO:0007669"/>
    <property type="project" value="InterPro"/>
</dbReference>
<dbReference type="GO" id="GO:0004497">
    <property type="term" value="F:monooxygenase activity"/>
    <property type="evidence" value="ECO:0007669"/>
    <property type="project" value="UniProtKB-KW"/>
</dbReference>
<dbReference type="GO" id="GO:0016705">
    <property type="term" value="F:oxidoreductase activity, acting on paired donors, with incorporation or reduction of molecular oxygen"/>
    <property type="evidence" value="ECO:0007669"/>
    <property type="project" value="InterPro"/>
</dbReference>
<dbReference type="GO" id="GO:0016114">
    <property type="term" value="P:terpenoid biosynthetic process"/>
    <property type="evidence" value="ECO:0007669"/>
    <property type="project" value="UniProtKB-UniPathway"/>
</dbReference>
<dbReference type="Gene3D" id="1.10.630.10">
    <property type="entry name" value="Cytochrome P450"/>
    <property type="match status" value="1"/>
</dbReference>
<dbReference type="InterPro" id="IPR001128">
    <property type="entry name" value="Cyt_P450"/>
</dbReference>
<dbReference type="InterPro" id="IPR017972">
    <property type="entry name" value="Cyt_P450_CS"/>
</dbReference>
<dbReference type="InterPro" id="IPR002401">
    <property type="entry name" value="Cyt_P450_E_grp-I"/>
</dbReference>
<dbReference type="InterPro" id="IPR036396">
    <property type="entry name" value="Cyt_P450_sf"/>
</dbReference>
<dbReference type="InterPro" id="IPR050476">
    <property type="entry name" value="Insect_CytP450_Detox"/>
</dbReference>
<dbReference type="PANTHER" id="PTHR24292:SF54">
    <property type="entry name" value="CYP9F3-RELATED"/>
    <property type="match status" value="1"/>
</dbReference>
<dbReference type="PANTHER" id="PTHR24292">
    <property type="entry name" value="CYTOCHROME P450"/>
    <property type="match status" value="1"/>
</dbReference>
<dbReference type="Pfam" id="PF00067">
    <property type="entry name" value="p450"/>
    <property type="match status" value="1"/>
</dbReference>
<dbReference type="PRINTS" id="PR00463">
    <property type="entry name" value="EP450I"/>
</dbReference>
<dbReference type="PRINTS" id="PR00385">
    <property type="entry name" value="P450"/>
</dbReference>
<dbReference type="SUPFAM" id="SSF48264">
    <property type="entry name" value="Cytochrome P450"/>
    <property type="match status" value="1"/>
</dbReference>
<dbReference type="PROSITE" id="PS00086">
    <property type="entry name" value="CYTOCHROME_P450"/>
    <property type="match status" value="1"/>
</dbReference>
<sequence>MTIIENISYTHLAIGLIAYNVIKPLYGLHVNRKKAIATGLPYVYTAVYEWSMVWLLVKEIAWPVLKALRLGWLVKYSRPSWNFDAKNKVHEDLGDIFCVVSPGGLSIFVGDPDVICEVTKKRTKFPRPVKSFVKVMGYFGPSILSSEHDEWRFHRRVTNKTFTEPNHKVVWFDSLYQASAMRDEWLSGLDNITSNKEGIIHKMGSDCMKLALHVVTLASFGVQIPWTAQKDAIPTGYEMSFREASEFFLEHIAIMAYCPKWLYKYGPKLAQTAGVAAKNMRRHMMELIQIEDEKLQNGEDGKNLLSAMLQSDDPEAQAKGGSAYDTASVSKTGVRKDFVMGNSAIFLLAGHETSARSLEYALFLFAMHPDVQEEIFEEIDEILEGVGNIYDLKYEEVFPKMVKTNGVLYEATRLFPVTPYIPKSTEDVVDSWFIYKDQRVDIPPESMVALNAIGVHYNERYWPEPYRFKPSRWYQTQKQEALGISPQDTLQLSGSNTDAARLYRRGTYLGFGEGPRNCPGKRFAQVEIMATFLALFREHRMELVLEPGETHRDAFDRAWAALQRSRMVITLNLFEQIKVKLVPRK</sequence>
<name>AR278_ARTOA</name>